<name>MURC_ALCBS</name>
<evidence type="ECO:0000255" key="1">
    <source>
        <dbReference type="HAMAP-Rule" id="MF_00046"/>
    </source>
</evidence>
<protein>
    <recommendedName>
        <fullName evidence="1">UDP-N-acetylmuramate--L-alanine ligase</fullName>
        <ecNumber evidence="1">6.3.2.8</ecNumber>
    </recommendedName>
    <alternativeName>
        <fullName evidence="1">UDP-N-acetylmuramoyl-L-alanine synthetase</fullName>
    </alternativeName>
</protein>
<dbReference type="EC" id="6.3.2.8" evidence="1"/>
<dbReference type="EMBL" id="AM286690">
    <property type="protein sequence ID" value="CAL16047.1"/>
    <property type="molecule type" value="Genomic_DNA"/>
</dbReference>
<dbReference type="RefSeq" id="WP_011587885.1">
    <property type="nucleotide sequence ID" value="NC_008260.1"/>
</dbReference>
<dbReference type="SMR" id="Q0VS01"/>
<dbReference type="STRING" id="393595.ABO_0599"/>
<dbReference type="KEGG" id="abo:ABO_0599"/>
<dbReference type="eggNOG" id="COG0773">
    <property type="taxonomic scope" value="Bacteria"/>
</dbReference>
<dbReference type="HOGENOM" id="CLU_028104_2_2_6"/>
<dbReference type="OrthoDB" id="9804126at2"/>
<dbReference type="UniPathway" id="UPA00219"/>
<dbReference type="Proteomes" id="UP000008871">
    <property type="component" value="Chromosome"/>
</dbReference>
<dbReference type="GO" id="GO:0005737">
    <property type="term" value="C:cytoplasm"/>
    <property type="evidence" value="ECO:0007669"/>
    <property type="project" value="UniProtKB-SubCell"/>
</dbReference>
<dbReference type="GO" id="GO:0005524">
    <property type="term" value="F:ATP binding"/>
    <property type="evidence" value="ECO:0007669"/>
    <property type="project" value="UniProtKB-UniRule"/>
</dbReference>
<dbReference type="GO" id="GO:0008763">
    <property type="term" value="F:UDP-N-acetylmuramate-L-alanine ligase activity"/>
    <property type="evidence" value="ECO:0007669"/>
    <property type="project" value="UniProtKB-UniRule"/>
</dbReference>
<dbReference type="GO" id="GO:0051301">
    <property type="term" value="P:cell division"/>
    <property type="evidence" value="ECO:0007669"/>
    <property type="project" value="UniProtKB-KW"/>
</dbReference>
<dbReference type="GO" id="GO:0071555">
    <property type="term" value="P:cell wall organization"/>
    <property type="evidence" value="ECO:0007669"/>
    <property type="project" value="UniProtKB-KW"/>
</dbReference>
<dbReference type="GO" id="GO:0009252">
    <property type="term" value="P:peptidoglycan biosynthetic process"/>
    <property type="evidence" value="ECO:0007669"/>
    <property type="project" value="UniProtKB-UniRule"/>
</dbReference>
<dbReference type="GO" id="GO:0008360">
    <property type="term" value="P:regulation of cell shape"/>
    <property type="evidence" value="ECO:0007669"/>
    <property type="project" value="UniProtKB-KW"/>
</dbReference>
<dbReference type="FunFam" id="3.40.1190.10:FF:000001">
    <property type="entry name" value="UDP-N-acetylmuramate--L-alanine ligase"/>
    <property type="match status" value="1"/>
</dbReference>
<dbReference type="Gene3D" id="3.90.190.20">
    <property type="entry name" value="Mur ligase, C-terminal domain"/>
    <property type="match status" value="1"/>
</dbReference>
<dbReference type="Gene3D" id="3.40.1190.10">
    <property type="entry name" value="Mur-like, catalytic domain"/>
    <property type="match status" value="1"/>
</dbReference>
<dbReference type="Gene3D" id="3.40.50.720">
    <property type="entry name" value="NAD(P)-binding Rossmann-like Domain"/>
    <property type="match status" value="1"/>
</dbReference>
<dbReference type="HAMAP" id="MF_00046">
    <property type="entry name" value="MurC"/>
    <property type="match status" value="1"/>
</dbReference>
<dbReference type="InterPro" id="IPR036565">
    <property type="entry name" value="Mur-like_cat_sf"/>
</dbReference>
<dbReference type="InterPro" id="IPR004101">
    <property type="entry name" value="Mur_ligase_C"/>
</dbReference>
<dbReference type="InterPro" id="IPR036615">
    <property type="entry name" value="Mur_ligase_C_dom_sf"/>
</dbReference>
<dbReference type="InterPro" id="IPR013221">
    <property type="entry name" value="Mur_ligase_cen"/>
</dbReference>
<dbReference type="InterPro" id="IPR000713">
    <property type="entry name" value="Mur_ligase_N"/>
</dbReference>
<dbReference type="InterPro" id="IPR050061">
    <property type="entry name" value="MurCDEF_pg_biosynth"/>
</dbReference>
<dbReference type="InterPro" id="IPR005758">
    <property type="entry name" value="UDP-N-AcMur_Ala_ligase_MurC"/>
</dbReference>
<dbReference type="NCBIfam" id="TIGR01082">
    <property type="entry name" value="murC"/>
    <property type="match status" value="1"/>
</dbReference>
<dbReference type="PANTHER" id="PTHR43445:SF3">
    <property type="entry name" value="UDP-N-ACETYLMURAMATE--L-ALANINE LIGASE"/>
    <property type="match status" value="1"/>
</dbReference>
<dbReference type="PANTHER" id="PTHR43445">
    <property type="entry name" value="UDP-N-ACETYLMURAMATE--L-ALANINE LIGASE-RELATED"/>
    <property type="match status" value="1"/>
</dbReference>
<dbReference type="Pfam" id="PF01225">
    <property type="entry name" value="Mur_ligase"/>
    <property type="match status" value="1"/>
</dbReference>
<dbReference type="Pfam" id="PF02875">
    <property type="entry name" value="Mur_ligase_C"/>
    <property type="match status" value="1"/>
</dbReference>
<dbReference type="Pfam" id="PF08245">
    <property type="entry name" value="Mur_ligase_M"/>
    <property type="match status" value="1"/>
</dbReference>
<dbReference type="SUPFAM" id="SSF51984">
    <property type="entry name" value="MurCD N-terminal domain"/>
    <property type="match status" value="1"/>
</dbReference>
<dbReference type="SUPFAM" id="SSF53623">
    <property type="entry name" value="MurD-like peptide ligases, catalytic domain"/>
    <property type="match status" value="1"/>
</dbReference>
<dbReference type="SUPFAM" id="SSF53244">
    <property type="entry name" value="MurD-like peptide ligases, peptide-binding domain"/>
    <property type="match status" value="1"/>
</dbReference>
<keyword id="KW-0067">ATP-binding</keyword>
<keyword id="KW-0131">Cell cycle</keyword>
<keyword id="KW-0132">Cell division</keyword>
<keyword id="KW-0133">Cell shape</keyword>
<keyword id="KW-0961">Cell wall biogenesis/degradation</keyword>
<keyword id="KW-0963">Cytoplasm</keyword>
<keyword id="KW-0436">Ligase</keyword>
<keyword id="KW-0547">Nucleotide-binding</keyword>
<keyword id="KW-0573">Peptidoglycan synthesis</keyword>
<keyword id="KW-1185">Reference proteome</keyword>
<accession>Q0VS01</accession>
<sequence>MADNDIIHTVPEMRRIRGIHFVGIGGVGMCGIAEVLANQGYAISGSDIKESPVLERLRSLGVRVDIGHRAENIDGADVVVTSTAVNTENLEVAAAHERRIPVVPRAQMLAELMRFRHGIAVAGTHGKTTTTSLTAAIMAEAGLDPTFVIGGRLNSAGTNARLGQSRYLVAEADESDASFLHLQPMSAIVTNVDADHMHTYGGDFAQLENTFIEFLHNLPFYGVAVMCVDDPVVRKLLPRVNRQVIRYGFSEDADLRAENVRQDGMVTHFRVVRAEGEPLDVSLNMPGRHNVLNALAAIAVSADEGAGDEAIIRGLNNFTGVGRRFDVQGDYHFDGGSATLVDDYGHHPREVAATIDAIREGWPGRRLAMLFQPHRYTRTQDLYEDFVEVLSGVDVLLMLEVYAAGEEPIPGADARALCRSLRKRGLEPVFVDDPDKLQGLLASQLQNGDLLVTQGAGNVGAIAKQLVAQGGGHG</sequence>
<feature type="chain" id="PRO_1000004306" description="UDP-N-acetylmuramate--L-alanine ligase">
    <location>
        <begin position="1"/>
        <end position="474"/>
    </location>
</feature>
<feature type="binding site" evidence="1">
    <location>
        <begin position="123"/>
        <end position="129"/>
    </location>
    <ligand>
        <name>ATP</name>
        <dbReference type="ChEBI" id="CHEBI:30616"/>
    </ligand>
</feature>
<proteinExistence type="inferred from homology"/>
<organism>
    <name type="scientific">Alcanivorax borkumensis (strain ATCC 700651 / DSM 11573 / NCIMB 13689 / SK2)</name>
    <dbReference type="NCBI Taxonomy" id="393595"/>
    <lineage>
        <taxon>Bacteria</taxon>
        <taxon>Pseudomonadati</taxon>
        <taxon>Pseudomonadota</taxon>
        <taxon>Gammaproteobacteria</taxon>
        <taxon>Oceanospirillales</taxon>
        <taxon>Alcanivoracaceae</taxon>
        <taxon>Alcanivorax</taxon>
    </lineage>
</organism>
<reference key="1">
    <citation type="journal article" date="2006" name="Nat. Biotechnol.">
        <title>Genome sequence of the ubiquitous hydrocarbon-degrading marine bacterium Alcanivorax borkumensis.</title>
        <authorList>
            <person name="Schneiker S."/>
            <person name="Martins dos Santos V.A.P."/>
            <person name="Bartels D."/>
            <person name="Bekel T."/>
            <person name="Brecht M."/>
            <person name="Buhrmester J."/>
            <person name="Chernikova T.N."/>
            <person name="Denaro R."/>
            <person name="Ferrer M."/>
            <person name="Gertler C."/>
            <person name="Goesmann A."/>
            <person name="Golyshina O.V."/>
            <person name="Kaminski F."/>
            <person name="Khachane A.N."/>
            <person name="Lang S."/>
            <person name="Linke B."/>
            <person name="McHardy A.C."/>
            <person name="Meyer F."/>
            <person name="Nechitaylo T."/>
            <person name="Puehler A."/>
            <person name="Regenhardt D."/>
            <person name="Rupp O."/>
            <person name="Sabirova J.S."/>
            <person name="Selbitschka W."/>
            <person name="Yakimov M.M."/>
            <person name="Timmis K.N."/>
            <person name="Vorhoelter F.-J."/>
            <person name="Weidner S."/>
            <person name="Kaiser O."/>
            <person name="Golyshin P.N."/>
        </authorList>
    </citation>
    <scope>NUCLEOTIDE SEQUENCE [LARGE SCALE GENOMIC DNA]</scope>
    <source>
        <strain>ATCC 700651 / DSM 11573 / NCIMB 13689 / SK2</strain>
    </source>
</reference>
<gene>
    <name evidence="1" type="primary">murC</name>
    <name type="ordered locus">ABO_0599</name>
</gene>
<comment type="function">
    <text evidence="1">Cell wall formation.</text>
</comment>
<comment type="catalytic activity">
    <reaction evidence="1">
        <text>UDP-N-acetyl-alpha-D-muramate + L-alanine + ATP = UDP-N-acetyl-alpha-D-muramoyl-L-alanine + ADP + phosphate + H(+)</text>
        <dbReference type="Rhea" id="RHEA:23372"/>
        <dbReference type="ChEBI" id="CHEBI:15378"/>
        <dbReference type="ChEBI" id="CHEBI:30616"/>
        <dbReference type="ChEBI" id="CHEBI:43474"/>
        <dbReference type="ChEBI" id="CHEBI:57972"/>
        <dbReference type="ChEBI" id="CHEBI:70757"/>
        <dbReference type="ChEBI" id="CHEBI:83898"/>
        <dbReference type="ChEBI" id="CHEBI:456216"/>
        <dbReference type="EC" id="6.3.2.8"/>
    </reaction>
</comment>
<comment type="pathway">
    <text evidence="1">Cell wall biogenesis; peptidoglycan biosynthesis.</text>
</comment>
<comment type="subcellular location">
    <subcellularLocation>
        <location evidence="1">Cytoplasm</location>
    </subcellularLocation>
</comment>
<comment type="similarity">
    <text evidence="1">Belongs to the MurCDEF family.</text>
</comment>